<accession>B0TI64</accession>
<reference key="1">
    <citation type="journal article" date="2008" name="J. Bacteriol.">
        <title>The genome of Heliobacterium modesticaldum, a phototrophic representative of the Firmicutes containing the simplest photosynthetic apparatus.</title>
        <authorList>
            <person name="Sattley W.M."/>
            <person name="Madigan M.T."/>
            <person name="Swingley W.D."/>
            <person name="Cheung P.C."/>
            <person name="Clocksin K.M."/>
            <person name="Conrad A.L."/>
            <person name="Dejesa L.C."/>
            <person name="Honchak B.M."/>
            <person name="Jung D.O."/>
            <person name="Karbach L.E."/>
            <person name="Kurdoglu A."/>
            <person name="Lahiri S."/>
            <person name="Mastrian S.D."/>
            <person name="Page L.E."/>
            <person name="Taylor H.L."/>
            <person name="Wang Z.T."/>
            <person name="Raymond J."/>
            <person name="Chen M."/>
            <person name="Blankenship R.E."/>
            <person name="Touchman J.W."/>
        </authorList>
    </citation>
    <scope>NUCLEOTIDE SEQUENCE [LARGE SCALE GENOMIC DNA]</scope>
    <source>
        <strain>ATCC 51547 / Ice1</strain>
    </source>
</reference>
<dbReference type="EC" id="2.1.2.1" evidence="1"/>
<dbReference type="EMBL" id="CP000930">
    <property type="protein sequence ID" value="ABZ83484.1"/>
    <property type="molecule type" value="Genomic_DNA"/>
</dbReference>
<dbReference type="RefSeq" id="WP_012282013.1">
    <property type="nucleotide sequence ID" value="NC_010337.2"/>
</dbReference>
<dbReference type="SMR" id="B0TI64"/>
<dbReference type="STRING" id="498761.HM1_1090"/>
<dbReference type="KEGG" id="hmo:HM1_1090"/>
<dbReference type="eggNOG" id="COG0112">
    <property type="taxonomic scope" value="Bacteria"/>
</dbReference>
<dbReference type="HOGENOM" id="CLU_022477_2_1_9"/>
<dbReference type="OrthoDB" id="9803846at2"/>
<dbReference type="UniPathway" id="UPA00193"/>
<dbReference type="UniPathway" id="UPA00288">
    <property type="reaction ID" value="UER01023"/>
</dbReference>
<dbReference type="Proteomes" id="UP000008550">
    <property type="component" value="Chromosome"/>
</dbReference>
<dbReference type="GO" id="GO:0005829">
    <property type="term" value="C:cytosol"/>
    <property type="evidence" value="ECO:0007669"/>
    <property type="project" value="TreeGrafter"/>
</dbReference>
<dbReference type="GO" id="GO:0004372">
    <property type="term" value="F:glycine hydroxymethyltransferase activity"/>
    <property type="evidence" value="ECO:0007669"/>
    <property type="project" value="UniProtKB-UniRule"/>
</dbReference>
<dbReference type="GO" id="GO:0030170">
    <property type="term" value="F:pyridoxal phosphate binding"/>
    <property type="evidence" value="ECO:0007669"/>
    <property type="project" value="UniProtKB-UniRule"/>
</dbReference>
<dbReference type="GO" id="GO:0019264">
    <property type="term" value="P:glycine biosynthetic process from serine"/>
    <property type="evidence" value="ECO:0007669"/>
    <property type="project" value="UniProtKB-UniRule"/>
</dbReference>
<dbReference type="GO" id="GO:0035999">
    <property type="term" value="P:tetrahydrofolate interconversion"/>
    <property type="evidence" value="ECO:0007669"/>
    <property type="project" value="UniProtKB-UniRule"/>
</dbReference>
<dbReference type="CDD" id="cd00378">
    <property type="entry name" value="SHMT"/>
    <property type="match status" value="1"/>
</dbReference>
<dbReference type="FunFam" id="3.40.640.10:FF:000001">
    <property type="entry name" value="Serine hydroxymethyltransferase"/>
    <property type="match status" value="1"/>
</dbReference>
<dbReference type="Gene3D" id="3.90.1150.10">
    <property type="entry name" value="Aspartate Aminotransferase, domain 1"/>
    <property type="match status" value="1"/>
</dbReference>
<dbReference type="Gene3D" id="3.40.640.10">
    <property type="entry name" value="Type I PLP-dependent aspartate aminotransferase-like (Major domain)"/>
    <property type="match status" value="1"/>
</dbReference>
<dbReference type="HAMAP" id="MF_00051">
    <property type="entry name" value="SHMT"/>
    <property type="match status" value="1"/>
</dbReference>
<dbReference type="InterPro" id="IPR015424">
    <property type="entry name" value="PyrdxlP-dep_Trfase"/>
</dbReference>
<dbReference type="InterPro" id="IPR015421">
    <property type="entry name" value="PyrdxlP-dep_Trfase_major"/>
</dbReference>
<dbReference type="InterPro" id="IPR015422">
    <property type="entry name" value="PyrdxlP-dep_Trfase_small"/>
</dbReference>
<dbReference type="InterPro" id="IPR001085">
    <property type="entry name" value="Ser_HO-MeTrfase"/>
</dbReference>
<dbReference type="InterPro" id="IPR049943">
    <property type="entry name" value="Ser_HO-MeTrfase-like"/>
</dbReference>
<dbReference type="InterPro" id="IPR019798">
    <property type="entry name" value="Ser_HO-MeTrfase_PLP_BS"/>
</dbReference>
<dbReference type="InterPro" id="IPR039429">
    <property type="entry name" value="SHMT-like_dom"/>
</dbReference>
<dbReference type="NCBIfam" id="NF000586">
    <property type="entry name" value="PRK00011.1"/>
    <property type="match status" value="1"/>
</dbReference>
<dbReference type="PANTHER" id="PTHR11680">
    <property type="entry name" value="SERINE HYDROXYMETHYLTRANSFERASE"/>
    <property type="match status" value="1"/>
</dbReference>
<dbReference type="PANTHER" id="PTHR11680:SF35">
    <property type="entry name" value="SERINE HYDROXYMETHYLTRANSFERASE 1"/>
    <property type="match status" value="1"/>
</dbReference>
<dbReference type="Pfam" id="PF00464">
    <property type="entry name" value="SHMT"/>
    <property type="match status" value="1"/>
</dbReference>
<dbReference type="PIRSF" id="PIRSF000412">
    <property type="entry name" value="SHMT"/>
    <property type="match status" value="1"/>
</dbReference>
<dbReference type="SUPFAM" id="SSF53383">
    <property type="entry name" value="PLP-dependent transferases"/>
    <property type="match status" value="1"/>
</dbReference>
<dbReference type="PROSITE" id="PS00096">
    <property type="entry name" value="SHMT"/>
    <property type="match status" value="1"/>
</dbReference>
<proteinExistence type="inferred from homology"/>
<gene>
    <name evidence="1" type="primary">glyA</name>
    <name type="ordered locus">Helmi_08590</name>
    <name type="ORF">HM1_1090</name>
</gene>
<evidence type="ECO:0000255" key="1">
    <source>
        <dbReference type="HAMAP-Rule" id="MF_00051"/>
    </source>
</evidence>
<comment type="function">
    <text evidence="1">Catalyzes the reversible interconversion of serine and glycine with tetrahydrofolate (THF) serving as the one-carbon carrier. This reaction serves as the major source of one-carbon groups required for the biosynthesis of purines, thymidylate, methionine, and other important biomolecules. Also exhibits THF-independent aldolase activity toward beta-hydroxyamino acids, producing glycine and aldehydes, via a retro-aldol mechanism.</text>
</comment>
<comment type="catalytic activity">
    <reaction evidence="1">
        <text>(6R)-5,10-methylene-5,6,7,8-tetrahydrofolate + glycine + H2O = (6S)-5,6,7,8-tetrahydrofolate + L-serine</text>
        <dbReference type="Rhea" id="RHEA:15481"/>
        <dbReference type="ChEBI" id="CHEBI:15377"/>
        <dbReference type="ChEBI" id="CHEBI:15636"/>
        <dbReference type="ChEBI" id="CHEBI:33384"/>
        <dbReference type="ChEBI" id="CHEBI:57305"/>
        <dbReference type="ChEBI" id="CHEBI:57453"/>
        <dbReference type="EC" id="2.1.2.1"/>
    </reaction>
</comment>
<comment type="cofactor">
    <cofactor evidence="1">
        <name>pyridoxal 5'-phosphate</name>
        <dbReference type="ChEBI" id="CHEBI:597326"/>
    </cofactor>
</comment>
<comment type="pathway">
    <text evidence="1">One-carbon metabolism; tetrahydrofolate interconversion.</text>
</comment>
<comment type="pathway">
    <text evidence="1">Amino-acid biosynthesis; glycine biosynthesis; glycine from L-serine: step 1/1.</text>
</comment>
<comment type="subunit">
    <text evidence="1">Homodimer.</text>
</comment>
<comment type="subcellular location">
    <subcellularLocation>
        <location evidence="1">Cytoplasm</location>
    </subcellularLocation>
</comment>
<comment type="similarity">
    <text evidence="1">Belongs to the SHMT family.</text>
</comment>
<name>GLYA_HELMI</name>
<feature type="chain" id="PRO_0000369927" description="Serine hydroxymethyltransferase">
    <location>
        <begin position="1"/>
        <end position="413"/>
    </location>
</feature>
<feature type="binding site" evidence="1">
    <location>
        <position position="120"/>
    </location>
    <ligand>
        <name>(6S)-5,6,7,8-tetrahydrofolate</name>
        <dbReference type="ChEBI" id="CHEBI:57453"/>
    </ligand>
</feature>
<feature type="binding site" evidence="1">
    <location>
        <begin position="124"/>
        <end position="126"/>
    </location>
    <ligand>
        <name>(6S)-5,6,7,8-tetrahydrofolate</name>
        <dbReference type="ChEBI" id="CHEBI:57453"/>
    </ligand>
</feature>
<feature type="binding site" evidence="1">
    <location>
        <begin position="352"/>
        <end position="354"/>
    </location>
    <ligand>
        <name>(6S)-5,6,7,8-tetrahydrofolate</name>
        <dbReference type="ChEBI" id="CHEBI:57453"/>
    </ligand>
</feature>
<feature type="site" description="Plays an important role in substrate specificity" evidence="1">
    <location>
        <position position="228"/>
    </location>
</feature>
<feature type="modified residue" description="N6-(pyridoxal phosphate)lysine" evidence="1">
    <location>
        <position position="229"/>
    </location>
</feature>
<sequence length="413" mass="44522">MSEWKHLHQVDPEVAAAMDREKKRQKNNIELIASENFVSEAVMEAAGSVLTNKYAEGYPGKRYYGGCEFVDQVERLAIERAKRLFGAEHANVQPHSGANANMGVYFACLEPGDTVLGMNLAHGGHLTHGSPVNISGKYFRFVAYGVDAHTGRIDYDEVARIARETKPKLIVAGASAYPRVLDFARFRAIADEVGAMLMVDMAHIAGLVAAGLHPSPVPYAEFVTTTTHKTLRGPRGGMILCKQEWAAKVDKAIFPGLQGGPLMHIIAAKAVAFQEAMAPAFTAYQKQIAANAAALAKGLTDRGFQLVSGGTDNHLMLVDLRNKQLTGKEAEKRLDECRITVNKNAIPFDPQSPFVTSGIRIGTPAATSRGMDEAAMDQVAEAIHLCLSDGSEGAMQKAVAIVDALCARFPLYA</sequence>
<protein>
    <recommendedName>
        <fullName evidence="1">Serine hydroxymethyltransferase</fullName>
        <shortName evidence="1">SHMT</shortName>
        <shortName evidence="1">Serine methylase</shortName>
        <ecNumber evidence="1">2.1.2.1</ecNumber>
    </recommendedName>
</protein>
<organism>
    <name type="scientific">Heliobacterium modesticaldum (strain ATCC 51547 / Ice1)</name>
    <dbReference type="NCBI Taxonomy" id="498761"/>
    <lineage>
        <taxon>Bacteria</taxon>
        <taxon>Bacillati</taxon>
        <taxon>Bacillota</taxon>
        <taxon>Clostridia</taxon>
        <taxon>Eubacteriales</taxon>
        <taxon>Heliobacteriaceae</taxon>
        <taxon>Heliomicrobium</taxon>
    </lineage>
</organism>
<keyword id="KW-0028">Amino-acid biosynthesis</keyword>
<keyword id="KW-0963">Cytoplasm</keyword>
<keyword id="KW-0554">One-carbon metabolism</keyword>
<keyword id="KW-0663">Pyridoxal phosphate</keyword>
<keyword id="KW-1185">Reference proteome</keyword>
<keyword id="KW-0808">Transferase</keyword>